<comment type="function">
    <text evidence="1">Probably part of an ABC transporter complex. Responsible for energy coupling to the transport system (By similarity).</text>
</comment>
<comment type="subcellular location">
    <subcellularLocation>
        <location evidence="1">Cell inner membrane</location>
        <topology evidence="1">Peripheral membrane protein</topology>
    </subcellularLocation>
</comment>
<comment type="similarity">
    <text evidence="3">Belongs to the ABC transporter superfamily.</text>
</comment>
<name>Y3001_GEOSL</name>
<keyword id="KW-0067">ATP-binding</keyword>
<keyword id="KW-0997">Cell inner membrane</keyword>
<keyword id="KW-1003">Cell membrane</keyword>
<keyword id="KW-0472">Membrane</keyword>
<keyword id="KW-0547">Nucleotide-binding</keyword>
<keyword id="KW-1185">Reference proteome</keyword>
<keyword id="KW-1278">Translocase</keyword>
<keyword id="KW-0813">Transport</keyword>
<feature type="chain" id="PRO_0000092014" description="Putative ABC transporter ATP-binding protein GSU3001">
    <location>
        <begin position="1"/>
        <end position="279"/>
    </location>
</feature>
<feature type="domain" description="ABC transporter" evidence="2">
    <location>
        <begin position="1"/>
        <end position="237"/>
    </location>
</feature>
<feature type="binding site" evidence="2">
    <location>
        <begin position="36"/>
        <end position="43"/>
    </location>
    <ligand>
        <name>ATP</name>
        <dbReference type="ChEBI" id="CHEBI:30616"/>
    </ligand>
</feature>
<organism>
    <name type="scientific">Geobacter sulfurreducens (strain ATCC 51573 / DSM 12127 / PCA)</name>
    <dbReference type="NCBI Taxonomy" id="243231"/>
    <lineage>
        <taxon>Bacteria</taxon>
        <taxon>Pseudomonadati</taxon>
        <taxon>Thermodesulfobacteriota</taxon>
        <taxon>Desulfuromonadia</taxon>
        <taxon>Geobacterales</taxon>
        <taxon>Geobacteraceae</taxon>
        <taxon>Geobacter</taxon>
    </lineage>
</organism>
<dbReference type="EC" id="7.-.-.-"/>
<dbReference type="EMBL" id="AE017180">
    <property type="protein sequence ID" value="AAR36393.1"/>
    <property type="molecule type" value="Genomic_DNA"/>
</dbReference>
<dbReference type="RefSeq" id="NP_954043.1">
    <property type="nucleotide sequence ID" value="NC_002939.5"/>
</dbReference>
<dbReference type="RefSeq" id="WP_010943631.1">
    <property type="nucleotide sequence ID" value="NC_002939.5"/>
</dbReference>
<dbReference type="SMR" id="Q748K0"/>
<dbReference type="STRING" id="243231.GSU3001"/>
<dbReference type="EnsemblBacteria" id="AAR36393">
    <property type="protein sequence ID" value="AAR36393"/>
    <property type="gene ID" value="GSU3001"/>
</dbReference>
<dbReference type="KEGG" id="gsu:GSU3001"/>
<dbReference type="PATRIC" id="fig|243231.5.peg.3028"/>
<dbReference type="eggNOG" id="COG1122">
    <property type="taxonomic scope" value="Bacteria"/>
</dbReference>
<dbReference type="HOGENOM" id="CLU_000604_1_22_7"/>
<dbReference type="InParanoid" id="Q748K0"/>
<dbReference type="OrthoDB" id="9782163at2"/>
<dbReference type="Proteomes" id="UP000000577">
    <property type="component" value="Chromosome"/>
</dbReference>
<dbReference type="GO" id="GO:0043190">
    <property type="term" value="C:ATP-binding cassette (ABC) transporter complex"/>
    <property type="evidence" value="ECO:0000318"/>
    <property type="project" value="GO_Central"/>
</dbReference>
<dbReference type="GO" id="GO:0005524">
    <property type="term" value="F:ATP binding"/>
    <property type="evidence" value="ECO:0000318"/>
    <property type="project" value="GO_Central"/>
</dbReference>
<dbReference type="GO" id="GO:0016887">
    <property type="term" value="F:ATP hydrolysis activity"/>
    <property type="evidence" value="ECO:0007669"/>
    <property type="project" value="InterPro"/>
</dbReference>
<dbReference type="GO" id="GO:0042626">
    <property type="term" value="F:ATPase-coupled transmembrane transporter activity"/>
    <property type="evidence" value="ECO:0000318"/>
    <property type="project" value="GO_Central"/>
</dbReference>
<dbReference type="GO" id="GO:0006824">
    <property type="term" value="P:cobalt ion transport"/>
    <property type="evidence" value="ECO:0007669"/>
    <property type="project" value="InterPro"/>
</dbReference>
<dbReference type="CDD" id="cd03225">
    <property type="entry name" value="ABC_cobalt_CbiO_domain1"/>
    <property type="match status" value="1"/>
</dbReference>
<dbReference type="FunFam" id="3.40.50.300:FF:000224">
    <property type="entry name" value="Energy-coupling factor transporter ATP-binding protein EcfA"/>
    <property type="match status" value="1"/>
</dbReference>
<dbReference type="Gene3D" id="3.40.50.300">
    <property type="entry name" value="P-loop containing nucleotide triphosphate hydrolases"/>
    <property type="match status" value="1"/>
</dbReference>
<dbReference type="InterPro" id="IPR003593">
    <property type="entry name" value="AAA+_ATPase"/>
</dbReference>
<dbReference type="InterPro" id="IPR003439">
    <property type="entry name" value="ABC_transporter-like_ATP-bd"/>
</dbReference>
<dbReference type="InterPro" id="IPR017871">
    <property type="entry name" value="ABC_transporter-like_CS"/>
</dbReference>
<dbReference type="InterPro" id="IPR015856">
    <property type="entry name" value="ABC_transpr_CbiO/EcfA_su"/>
</dbReference>
<dbReference type="InterPro" id="IPR005876">
    <property type="entry name" value="Co_trans_ATP-bd"/>
</dbReference>
<dbReference type="InterPro" id="IPR050095">
    <property type="entry name" value="ECF_ABC_transporter_ATP-bd"/>
</dbReference>
<dbReference type="InterPro" id="IPR027417">
    <property type="entry name" value="P-loop_NTPase"/>
</dbReference>
<dbReference type="NCBIfam" id="TIGR01166">
    <property type="entry name" value="cbiO"/>
    <property type="match status" value="1"/>
</dbReference>
<dbReference type="PANTHER" id="PTHR43553:SF24">
    <property type="entry name" value="ENERGY-COUPLING FACTOR TRANSPORTER ATP-BINDING PROTEIN ECFA1"/>
    <property type="match status" value="1"/>
</dbReference>
<dbReference type="PANTHER" id="PTHR43553">
    <property type="entry name" value="HEAVY METAL TRANSPORTER"/>
    <property type="match status" value="1"/>
</dbReference>
<dbReference type="Pfam" id="PF00005">
    <property type="entry name" value="ABC_tran"/>
    <property type="match status" value="1"/>
</dbReference>
<dbReference type="SMART" id="SM00382">
    <property type="entry name" value="AAA"/>
    <property type="match status" value="1"/>
</dbReference>
<dbReference type="SUPFAM" id="SSF52540">
    <property type="entry name" value="P-loop containing nucleoside triphosphate hydrolases"/>
    <property type="match status" value="1"/>
</dbReference>
<dbReference type="PROSITE" id="PS00211">
    <property type="entry name" value="ABC_TRANSPORTER_1"/>
    <property type="match status" value="1"/>
</dbReference>
<dbReference type="PROSITE" id="PS50893">
    <property type="entry name" value="ABC_TRANSPORTER_2"/>
    <property type="match status" value="1"/>
</dbReference>
<evidence type="ECO:0000250" key="1"/>
<evidence type="ECO:0000255" key="2">
    <source>
        <dbReference type="PROSITE-ProRule" id="PRU00434"/>
    </source>
</evidence>
<evidence type="ECO:0000305" key="3"/>
<gene>
    <name type="ordered locus">GSU3001</name>
</gene>
<protein>
    <recommendedName>
        <fullName>Putative ABC transporter ATP-binding protein GSU3001</fullName>
        <ecNumber>7.-.-.-</ecNumber>
    </recommendedName>
</protein>
<reference key="1">
    <citation type="journal article" date="2003" name="Science">
        <title>Genome of Geobacter sulfurreducens: metal reduction in subsurface environments.</title>
        <authorList>
            <person name="Methe B.A."/>
            <person name="Nelson K.E."/>
            <person name="Eisen J.A."/>
            <person name="Paulsen I.T."/>
            <person name="Nelson W.C."/>
            <person name="Heidelberg J.F."/>
            <person name="Wu D."/>
            <person name="Wu M."/>
            <person name="Ward N.L."/>
            <person name="Beanan M.J."/>
            <person name="Dodson R.J."/>
            <person name="Madupu R."/>
            <person name="Brinkac L.M."/>
            <person name="Daugherty S.C."/>
            <person name="DeBoy R.T."/>
            <person name="Durkin A.S."/>
            <person name="Gwinn M.L."/>
            <person name="Kolonay J.F."/>
            <person name="Sullivan S.A."/>
            <person name="Haft D.H."/>
            <person name="Selengut J."/>
            <person name="Davidsen T.M."/>
            <person name="Zafar N."/>
            <person name="White O."/>
            <person name="Tran B."/>
            <person name="Romero C."/>
            <person name="Forberger H.A."/>
            <person name="Weidman J.F."/>
            <person name="Khouri H.M."/>
            <person name="Feldblyum T.V."/>
            <person name="Utterback T.R."/>
            <person name="Van Aken S.E."/>
            <person name="Lovley D.R."/>
            <person name="Fraser C.M."/>
        </authorList>
    </citation>
    <scope>NUCLEOTIDE SEQUENCE [LARGE SCALE GENOMIC DNA]</scope>
    <source>
        <strain>ATCC 51573 / DSM 12127 / PCA</strain>
    </source>
</reference>
<accession>Q748K0</accession>
<sequence>MRFSVDLKAYAYPDGTVALSDIRFQVARGEFCGILGSNGSGKTTLLKIMDGLIREYDGSVLLDGRDVRSLQPKDIYRTVGLVFQNPDDQLFAHTVFEDVAFGPRNMGFAEAEVKARVERALEAVDLAGAAAKQIHHLSYGQKKRACIAGLLAMGHEVLLMDEPTAGLDPMGEYRMMELLTRLNRQEGVTIVMATHSVDLVPLFLHRLYILSRGRIVRGGPPEEVFTAPAEMESVKLRLPHIAELIHRLKHEDGVPFRRTPLTIGEARREIMELMETTRS</sequence>
<proteinExistence type="inferred from homology"/>